<accession>Q1R9G8</accession>
<reference key="1">
    <citation type="journal article" date="2006" name="Proc. Natl. Acad. Sci. U.S.A.">
        <title>Identification of genes subject to positive selection in uropathogenic strains of Escherichia coli: a comparative genomics approach.</title>
        <authorList>
            <person name="Chen S.L."/>
            <person name="Hung C.-S."/>
            <person name="Xu J."/>
            <person name="Reigstad C.S."/>
            <person name="Magrini V."/>
            <person name="Sabo A."/>
            <person name="Blasiar D."/>
            <person name="Bieri T."/>
            <person name="Meyer R.R."/>
            <person name="Ozersky P."/>
            <person name="Armstrong J.R."/>
            <person name="Fulton R.S."/>
            <person name="Latreille J.P."/>
            <person name="Spieth J."/>
            <person name="Hooton T.M."/>
            <person name="Mardis E.R."/>
            <person name="Hultgren S.J."/>
            <person name="Gordon J.I."/>
        </authorList>
    </citation>
    <scope>NUCLEOTIDE SEQUENCE [LARGE SCALE GENOMIC DNA]</scope>
    <source>
        <strain>UTI89 / UPEC</strain>
    </source>
</reference>
<gene>
    <name evidence="1" type="primary">rhmD</name>
    <name type="ordered locus">UTI89_C2529</name>
</gene>
<comment type="function">
    <text evidence="1">Catalyzes the dehydration of L-rhamnonate to 2-keto-3-deoxy-L-rhamnonate (KDR).</text>
</comment>
<comment type="catalytic activity">
    <reaction evidence="1">
        <text>L-rhamnonate = 2-dehydro-3-deoxy-L-rhamnonate + H2O</text>
        <dbReference type="Rhea" id="RHEA:23080"/>
        <dbReference type="ChEBI" id="CHEBI:15377"/>
        <dbReference type="ChEBI" id="CHEBI:58118"/>
        <dbReference type="ChEBI" id="CHEBI:58371"/>
        <dbReference type="EC" id="4.2.1.90"/>
    </reaction>
</comment>
<comment type="cofactor">
    <cofactor evidence="1">
        <name>Mg(2+)</name>
        <dbReference type="ChEBI" id="CHEBI:18420"/>
    </cofactor>
    <text evidence="1">Binds 1 Mg(2+) ion per subunit.</text>
</comment>
<comment type="subunit">
    <text evidence="1">Homooctamer; tetramer of dimers.</text>
</comment>
<comment type="miscellaneous">
    <text evidence="1">Reaction proceeds via a syn dehydration.</text>
</comment>
<comment type="similarity">
    <text evidence="1">Belongs to the mandelate racemase/muconate lactonizing enzyme family. RhamD subfamily.</text>
</comment>
<organism>
    <name type="scientific">Escherichia coli (strain UTI89 / UPEC)</name>
    <dbReference type="NCBI Taxonomy" id="364106"/>
    <lineage>
        <taxon>Bacteria</taxon>
        <taxon>Pseudomonadati</taxon>
        <taxon>Pseudomonadota</taxon>
        <taxon>Gammaproteobacteria</taxon>
        <taxon>Enterobacterales</taxon>
        <taxon>Enterobacteriaceae</taxon>
        <taxon>Escherichia</taxon>
    </lineage>
</organism>
<sequence>MENIMTLPKIKQVRAWFTGGAIAEKGAGGGDYHDQGANHWIDDHIATPMSKYRDYEQSRQSFGINVLGTLVVEVEAENGQTGFAVSTAGEMGCFIVEKHLNRFIEGKCVSDIKLIHDQMLNATLYYSGSGGLVMNTISCVDLALWDLFGKVVGLPVYKLLGGAVRDEIQFYATGARPDLAKEMGFIGGKMPTHWGPHDGDAGIRKDAAMVADMREKCGEDFWLMLDCWMSQDVNYATKLAHACAPYNLKWIEECLPPQQYEGYRELKHNAPAGMMVTSGEHHGTLQSFRTLSETGIDIMQPDVGWCGGLTTLVEIAAIAKSRGQLVVPHGSSVYSHHAVITFTNTPFSEFLMTSPDCSTMRPQFDPILLNEPVPVNGRIHKSVLDKPGFGVELNRDCNLKRPYSH</sequence>
<protein>
    <recommendedName>
        <fullName evidence="1">L-rhamnonate dehydratase</fullName>
        <shortName evidence="1">RhamD</shortName>
        <ecNumber evidence="1">4.2.1.90</ecNumber>
    </recommendedName>
</protein>
<keyword id="KW-0456">Lyase</keyword>
<keyword id="KW-0460">Magnesium</keyword>
<keyword id="KW-0479">Metal-binding</keyword>
<evidence type="ECO:0000255" key="1">
    <source>
        <dbReference type="HAMAP-Rule" id="MF_01288"/>
    </source>
</evidence>
<name>RHMD_ECOUT</name>
<feature type="chain" id="PRO_0000351694" description="L-rhamnonate dehydratase">
    <location>
        <begin position="1"/>
        <end position="405"/>
    </location>
</feature>
<feature type="active site" description="Proton acceptor" evidence="1">
    <location>
        <position position="329"/>
    </location>
</feature>
<feature type="binding site" evidence="1">
    <location>
        <position position="33"/>
    </location>
    <ligand>
        <name>substrate</name>
    </ligand>
</feature>
<feature type="binding site" evidence="1">
    <location>
        <position position="59"/>
    </location>
    <ligand>
        <name>substrate</name>
    </ligand>
</feature>
<feature type="binding site" evidence="1">
    <location>
        <position position="226"/>
    </location>
    <ligand>
        <name>Mg(2+)</name>
        <dbReference type="ChEBI" id="CHEBI:18420"/>
    </ligand>
</feature>
<feature type="binding site" evidence="1">
    <location>
        <position position="252"/>
    </location>
    <ligand>
        <name>Mg(2+)</name>
        <dbReference type="ChEBI" id="CHEBI:18420"/>
    </ligand>
</feature>
<feature type="binding site" evidence="1">
    <location>
        <position position="280"/>
    </location>
    <ligand>
        <name>Mg(2+)</name>
        <dbReference type="ChEBI" id="CHEBI:18420"/>
    </ligand>
</feature>
<feature type="binding site" evidence="1">
    <location>
        <position position="349"/>
    </location>
    <ligand>
        <name>substrate</name>
    </ligand>
</feature>
<feature type="site" description="Increases basicity of active site His" evidence="1">
    <location>
        <position position="302"/>
    </location>
</feature>
<feature type="site" description="Transition state stabilizer" evidence="1">
    <location>
        <position position="349"/>
    </location>
</feature>
<dbReference type="EC" id="4.2.1.90" evidence="1"/>
<dbReference type="EMBL" id="CP000243">
    <property type="protein sequence ID" value="ABE07996.1"/>
    <property type="molecule type" value="Genomic_DNA"/>
</dbReference>
<dbReference type="SMR" id="Q1R9G8"/>
<dbReference type="KEGG" id="eci:UTI89_C2529"/>
<dbReference type="HOGENOM" id="CLU_030273_1_0_6"/>
<dbReference type="Proteomes" id="UP000001952">
    <property type="component" value="Chromosome"/>
</dbReference>
<dbReference type="GO" id="GO:0050032">
    <property type="term" value="F:L-rhamnonate dehydratase activity"/>
    <property type="evidence" value="ECO:0007669"/>
    <property type="project" value="UniProtKB-UniRule"/>
</dbReference>
<dbReference type="GO" id="GO:0000287">
    <property type="term" value="F:magnesium ion binding"/>
    <property type="evidence" value="ECO:0007669"/>
    <property type="project" value="UniProtKB-UniRule"/>
</dbReference>
<dbReference type="GO" id="GO:0009063">
    <property type="term" value="P:amino acid catabolic process"/>
    <property type="evidence" value="ECO:0007669"/>
    <property type="project" value="InterPro"/>
</dbReference>
<dbReference type="GO" id="GO:0016052">
    <property type="term" value="P:carbohydrate catabolic process"/>
    <property type="evidence" value="ECO:0007669"/>
    <property type="project" value="TreeGrafter"/>
</dbReference>
<dbReference type="CDD" id="cd03327">
    <property type="entry name" value="MR_like_2"/>
    <property type="match status" value="1"/>
</dbReference>
<dbReference type="FunFam" id="3.30.390.10:FF:000007">
    <property type="entry name" value="L-rhamnonate dehydratase"/>
    <property type="match status" value="1"/>
</dbReference>
<dbReference type="FunFam" id="3.20.20.120:FF:000005">
    <property type="entry name" value="Putative L-rhamnonate dehydratase"/>
    <property type="match status" value="1"/>
</dbReference>
<dbReference type="Gene3D" id="3.20.20.120">
    <property type="entry name" value="Enolase-like C-terminal domain"/>
    <property type="match status" value="1"/>
</dbReference>
<dbReference type="Gene3D" id="3.30.390.10">
    <property type="entry name" value="Enolase-like, N-terminal domain"/>
    <property type="match status" value="1"/>
</dbReference>
<dbReference type="HAMAP" id="MF_01288">
    <property type="entry name" value="Rhamnon_dehydrat"/>
    <property type="match status" value="1"/>
</dbReference>
<dbReference type="InterPro" id="IPR036849">
    <property type="entry name" value="Enolase-like_C_sf"/>
</dbReference>
<dbReference type="InterPro" id="IPR029017">
    <property type="entry name" value="Enolase-like_N"/>
</dbReference>
<dbReference type="InterPro" id="IPR029065">
    <property type="entry name" value="Enolase_C-like"/>
</dbReference>
<dbReference type="InterPro" id="IPR023444">
    <property type="entry name" value="L-Rhamnon_dehydrat"/>
</dbReference>
<dbReference type="InterPro" id="IPR018110">
    <property type="entry name" value="Mandel_Rmase/mucon_lact_enz_CS"/>
</dbReference>
<dbReference type="InterPro" id="IPR013342">
    <property type="entry name" value="Mandelate_racemase_C"/>
</dbReference>
<dbReference type="InterPro" id="IPR013341">
    <property type="entry name" value="Mandelate_racemase_N_dom"/>
</dbReference>
<dbReference type="InterPro" id="IPR046945">
    <property type="entry name" value="RHMD-like"/>
</dbReference>
<dbReference type="NCBIfam" id="NF011968">
    <property type="entry name" value="PRK15440.1"/>
    <property type="match status" value="1"/>
</dbReference>
<dbReference type="PANTHER" id="PTHR13794">
    <property type="entry name" value="ENOLASE SUPERFAMILY, MANDELATE RACEMASE"/>
    <property type="match status" value="1"/>
</dbReference>
<dbReference type="PANTHER" id="PTHR13794:SF58">
    <property type="entry name" value="MITOCHONDRIAL ENOLASE SUPERFAMILY MEMBER 1"/>
    <property type="match status" value="1"/>
</dbReference>
<dbReference type="Pfam" id="PF13378">
    <property type="entry name" value="MR_MLE_C"/>
    <property type="match status" value="1"/>
</dbReference>
<dbReference type="Pfam" id="PF02746">
    <property type="entry name" value="MR_MLE_N"/>
    <property type="match status" value="1"/>
</dbReference>
<dbReference type="SFLD" id="SFLDS00001">
    <property type="entry name" value="Enolase"/>
    <property type="match status" value="1"/>
</dbReference>
<dbReference type="SFLD" id="SFLDF00006">
    <property type="entry name" value="rhamnonate_dehydratase"/>
    <property type="match status" value="1"/>
</dbReference>
<dbReference type="SMART" id="SM00922">
    <property type="entry name" value="MR_MLE"/>
    <property type="match status" value="1"/>
</dbReference>
<dbReference type="SUPFAM" id="SSF51604">
    <property type="entry name" value="Enolase C-terminal domain-like"/>
    <property type="match status" value="1"/>
</dbReference>
<dbReference type="SUPFAM" id="SSF54826">
    <property type="entry name" value="Enolase N-terminal domain-like"/>
    <property type="match status" value="1"/>
</dbReference>
<dbReference type="PROSITE" id="PS00908">
    <property type="entry name" value="MR_MLE_1"/>
    <property type="match status" value="1"/>
</dbReference>
<proteinExistence type="inferred from homology"/>